<organism>
    <name type="scientific">Homo sapiens</name>
    <name type="common">Human</name>
    <dbReference type="NCBI Taxonomy" id="9606"/>
    <lineage>
        <taxon>Eukaryota</taxon>
        <taxon>Metazoa</taxon>
        <taxon>Chordata</taxon>
        <taxon>Craniata</taxon>
        <taxon>Vertebrata</taxon>
        <taxon>Euteleostomi</taxon>
        <taxon>Mammalia</taxon>
        <taxon>Eutheria</taxon>
        <taxon>Euarchontoglires</taxon>
        <taxon>Primates</taxon>
        <taxon>Haplorrhini</taxon>
        <taxon>Catarrhini</taxon>
        <taxon>Hominidae</taxon>
        <taxon>Homo</taxon>
    </lineage>
</organism>
<gene>
    <name type="primary">AWAT2</name>
    <name type="synonym">DC4</name>
    <name type="synonym">DGAT2L4</name>
    <name evidence="8" type="synonym">MFAT</name>
    <name type="synonym">WS</name>
</gene>
<evidence type="ECO:0000250" key="1">
    <source>
        <dbReference type="UniProtKB" id="Q6E1M8"/>
    </source>
</evidence>
<evidence type="ECO:0000255" key="2"/>
<evidence type="ECO:0000269" key="3">
    <source>
    </source>
</evidence>
<evidence type="ECO:0000269" key="4">
    <source>
    </source>
</evidence>
<evidence type="ECO:0000269" key="5">
    <source>
    </source>
</evidence>
<evidence type="ECO:0000269" key="6">
    <source>
    </source>
</evidence>
<evidence type="ECO:0000269" key="7">
    <source>
    </source>
</evidence>
<evidence type="ECO:0000303" key="8">
    <source>
    </source>
</evidence>
<evidence type="ECO:0000303" key="9">
    <source>
    </source>
</evidence>
<evidence type="ECO:0000305" key="10"/>
<evidence type="ECO:0000305" key="11">
    <source>
    </source>
</evidence>
<evidence type="ECO:0000305" key="12">
    <source>
    </source>
</evidence>
<evidence type="ECO:0000305" key="13">
    <source>
    </source>
</evidence>
<evidence type="ECO:0000305" key="14">
    <source>
    </source>
</evidence>
<evidence type="ECO:0000305" key="15">
    <source>
    </source>
</evidence>
<dbReference type="EC" id="2.3.1.75" evidence="3 4 5 7"/>
<dbReference type="EC" id="2.3.1.76" evidence="5 6"/>
<dbReference type="EC" id="2.3.1.20" evidence="5"/>
<dbReference type="EMBL" id="AY605053">
    <property type="protein sequence ID" value="AAT68764.1"/>
    <property type="molecule type" value="mRNA"/>
</dbReference>
<dbReference type="EMBL" id="BC063698">
    <property type="protein sequence ID" value="AAH63698.1"/>
    <property type="molecule type" value="mRNA"/>
</dbReference>
<dbReference type="EMBL" id="BN000156">
    <property type="protein sequence ID" value="CAD89267.1"/>
    <property type="molecule type" value="mRNA"/>
</dbReference>
<dbReference type="CCDS" id="CCDS35320.1"/>
<dbReference type="RefSeq" id="NP_001002254.1">
    <property type="nucleotide sequence ID" value="NM_001002254.1"/>
</dbReference>
<dbReference type="RefSeq" id="XP_011529178.1">
    <property type="nucleotide sequence ID" value="XM_011530876.3"/>
</dbReference>
<dbReference type="BioGRID" id="127716">
    <property type="interactions" value="29"/>
</dbReference>
<dbReference type="FunCoup" id="Q6E213">
    <property type="interactions" value="91"/>
</dbReference>
<dbReference type="IntAct" id="Q6E213">
    <property type="interactions" value="3"/>
</dbReference>
<dbReference type="STRING" id="9606.ENSP00000421172"/>
<dbReference type="BindingDB" id="Q6E213"/>
<dbReference type="ChEMBL" id="CHEMBL2375204"/>
<dbReference type="SwissLipids" id="SLP:000000301"/>
<dbReference type="iPTMnet" id="Q6E213"/>
<dbReference type="PhosphoSitePlus" id="Q6E213"/>
<dbReference type="BioMuta" id="AWAT2"/>
<dbReference type="DMDM" id="74748433"/>
<dbReference type="MassIVE" id="Q6E213"/>
<dbReference type="PaxDb" id="9606-ENSP00000421172"/>
<dbReference type="PeptideAtlas" id="Q6E213"/>
<dbReference type="Antibodypedia" id="55918">
    <property type="antibodies" value="98 antibodies from 22 providers"/>
</dbReference>
<dbReference type="DNASU" id="158835"/>
<dbReference type="Ensembl" id="ENST00000276101.7">
    <property type="protein sequence ID" value="ENSP00000421172.1"/>
    <property type="gene ID" value="ENSG00000147160.9"/>
</dbReference>
<dbReference type="GeneID" id="158835"/>
<dbReference type="KEGG" id="hsa:158835"/>
<dbReference type="MANE-Select" id="ENST00000276101.7">
    <property type="protein sequence ID" value="ENSP00000421172.1"/>
    <property type="RefSeq nucleotide sequence ID" value="NM_001002254.1"/>
    <property type="RefSeq protein sequence ID" value="NP_001002254.1"/>
</dbReference>
<dbReference type="UCSC" id="uc004dxt.1">
    <property type="organism name" value="human"/>
</dbReference>
<dbReference type="AGR" id="HGNC:23251"/>
<dbReference type="CTD" id="158835"/>
<dbReference type="DisGeNET" id="158835"/>
<dbReference type="GeneCards" id="AWAT2"/>
<dbReference type="HGNC" id="HGNC:23251">
    <property type="gene designation" value="AWAT2"/>
</dbReference>
<dbReference type="HPA" id="ENSG00000147160">
    <property type="expression patterns" value="Tissue enriched (skin)"/>
</dbReference>
<dbReference type="MIM" id="300925">
    <property type="type" value="gene"/>
</dbReference>
<dbReference type="neXtProt" id="NX_Q6E213"/>
<dbReference type="OpenTargets" id="ENSG00000147160"/>
<dbReference type="PharmGKB" id="PA164716410"/>
<dbReference type="VEuPathDB" id="HostDB:ENSG00000147160"/>
<dbReference type="eggNOG" id="KOG0831">
    <property type="taxonomic scope" value="Eukaryota"/>
</dbReference>
<dbReference type="GeneTree" id="ENSGT01030000234582"/>
<dbReference type="HOGENOM" id="CLU_023995_0_0_1"/>
<dbReference type="InParanoid" id="Q6E213"/>
<dbReference type="OMA" id="RMVHIYP"/>
<dbReference type="OrthoDB" id="264532at2759"/>
<dbReference type="PAN-GO" id="Q6E213">
    <property type="GO annotations" value="3 GO annotations based on evolutionary models"/>
</dbReference>
<dbReference type="PhylomeDB" id="Q6E213"/>
<dbReference type="TreeFam" id="TF314707"/>
<dbReference type="BRENDA" id="2.3.1.75">
    <property type="organism ID" value="2681"/>
</dbReference>
<dbReference type="PathwayCommons" id="Q6E213"/>
<dbReference type="Reactome" id="R-HSA-1482883">
    <property type="pathway name" value="Acyl chain remodeling of DAG and TAG"/>
</dbReference>
<dbReference type="Reactome" id="R-HSA-2187335">
    <property type="pathway name" value="The retinoid cycle in cones (daylight vision)"/>
</dbReference>
<dbReference type="Reactome" id="R-HSA-9640463">
    <property type="pathway name" value="Wax biosynthesis"/>
</dbReference>
<dbReference type="BioGRID-ORCS" id="158835">
    <property type="hits" value="15 hits in 764 CRISPR screens"/>
</dbReference>
<dbReference type="GenomeRNAi" id="158835"/>
<dbReference type="Pharos" id="Q6E213">
    <property type="development level" value="Tbio"/>
</dbReference>
<dbReference type="PRO" id="PR:Q6E213"/>
<dbReference type="Proteomes" id="UP000005640">
    <property type="component" value="Chromosome X"/>
</dbReference>
<dbReference type="RNAct" id="Q6E213">
    <property type="molecule type" value="protein"/>
</dbReference>
<dbReference type="Bgee" id="ENSG00000147160">
    <property type="expression patterns" value="Expressed in thymus and 25 other cell types or tissues"/>
</dbReference>
<dbReference type="ExpressionAtlas" id="Q6E213">
    <property type="expression patterns" value="baseline and differential"/>
</dbReference>
<dbReference type="GO" id="GO:0005789">
    <property type="term" value="C:endoplasmic reticulum membrane"/>
    <property type="evidence" value="ECO:0000318"/>
    <property type="project" value="GO_Central"/>
</dbReference>
<dbReference type="GO" id="GO:0003846">
    <property type="term" value="F:2-acylglycerol O-acyltransferase activity"/>
    <property type="evidence" value="ECO:0000304"/>
    <property type="project" value="Reactome"/>
</dbReference>
<dbReference type="GO" id="GO:0004144">
    <property type="term" value="F:diacylglycerol O-acyltransferase activity"/>
    <property type="evidence" value="ECO:0007669"/>
    <property type="project" value="RHEA"/>
</dbReference>
<dbReference type="GO" id="GO:0047196">
    <property type="term" value="F:long-chain-alcohol O-fatty-acyltransferase activity"/>
    <property type="evidence" value="ECO:0000269"/>
    <property type="project" value="Reactome"/>
</dbReference>
<dbReference type="GO" id="GO:0050252">
    <property type="term" value="F:retinol O-fatty-acyltransferase activity"/>
    <property type="evidence" value="ECO:0000314"/>
    <property type="project" value="UniProtKB"/>
</dbReference>
<dbReference type="GO" id="GO:0036155">
    <property type="term" value="P:acylglycerol acyl-chain remodeling"/>
    <property type="evidence" value="ECO:0000304"/>
    <property type="project" value="Reactome"/>
</dbReference>
<dbReference type="GO" id="GO:0006629">
    <property type="term" value="P:lipid metabolic process"/>
    <property type="evidence" value="ECO:0000318"/>
    <property type="project" value="GO_Central"/>
</dbReference>
<dbReference type="GO" id="GO:0006640">
    <property type="term" value="P:monoacylglycerol biosynthetic process"/>
    <property type="evidence" value="ECO:0000314"/>
    <property type="project" value="UniProtKB"/>
</dbReference>
<dbReference type="GO" id="GO:0001523">
    <property type="term" value="P:retinoid metabolic process"/>
    <property type="evidence" value="ECO:0000304"/>
    <property type="project" value="Reactome"/>
</dbReference>
<dbReference type="GO" id="GO:0010025">
    <property type="term" value="P:wax biosynthetic process"/>
    <property type="evidence" value="ECO:0000304"/>
    <property type="project" value="Reactome"/>
</dbReference>
<dbReference type="CDD" id="cd07987">
    <property type="entry name" value="LPLAT_MGAT-like"/>
    <property type="match status" value="1"/>
</dbReference>
<dbReference type="InterPro" id="IPR007130">
    <property type="entry name" value="DAGAT"/>
</dbReference>
<dbReference type="PANTHER" id="PTHR12317:SF12">
    <property type="entry name" value="ACYL-COA WAX ALCOHOL ACYLTRANSFERASE 2"/>
    <property type="match status" value="1"/>
</dbReference>
<dbReference type="PANTHER" id="PTHR12317">
    <property type="entry name" value="DIACYLGLYCEROL O-ACYLTRANSFERASE"/>
    <property type="match status" value="1"/>
</dbReference>
<dbReference type="Pfam" id="PF03982">
    <property type="entry name" value="DAGAT"/>
    <property type="match status" value="1"/>
</dbReference>
<dbReference type="SUPFAM" id="SSF69593">
    <property type="entry name" value="Glycerol-3-phosphate (1)-acyltransferase"/>
    <property type="match status" value="1"/>
</dbReference>
<reference key="1">
    <citation type="journal article" date="2004" name="J. Biol. Chem.">
        <title>Mammalian wax biosynthesis. II. Expression cloning of wax synthase cDNAs encoding a member of the acyltransferase enzyme family.</title>
        <authorList>
            <person name="Cheng J.B."/>
            <person name="Russell D.W."/>
        </authorList>
    </citation>
    <scope>NUCLEOTIDE SEQUENCE [MRNA]</scope>
    <scope>FUNCTION</scope>
    <scope>CATALYTIC ACTIVITY</scope>
    <scope>TISSUE SPECIFICITY</scope>
</reference>
<reference key="2">
    <citation type="journal article" date="2004" name="Genome Res.">
        <title>The status, quality, and expansion of the NIH full-length cDNA project: the Mammalian Gene Collection (MGC).</title>
        <authorList>
            <consortium name="The MGC Project Team"/>
        </authorList>
    </citation>
    <scope>NUCLEOTIDE SEQUENCE [LARGE SCALE MRNA] OF 176-333</scope>
    <source>
        <tissue>Skin</tissue>
    </source>
</reference>
<reference key="3">
    <citation type="journal article" date="2003" name="Cytogenet. Genome Res.">
        <title>Genomic organization of the DGAT2/MOGAT gene family in cattle (Bos taurus) and other mammals.</title>
        <authorList>
            <person name="Winter A."/>
            <person name="van Eckeveld M."/>
            <person name="Bininda-Emonds O.R.P."/>
            <person name="Habermann F.A."/>
            <person name="Fries R."/>
        </authorList>
    </citation>
    <scope>IDENTIFICATION</scope>
</reference>
<reference key="4">
    <citation type="journal article" date="2005" name="J. Biol. Chem.">
        <title>Identification of two novel human Acyl-CoA wax alcohol acyltransferases: members of the diacylglycerol acyltransferase 2 (DGAT2) gene superfamily.</title>
        <authorList>
            <person name="Turkish A.R."/>
            <person name="Henneberry A.L."/>
            <person name="Cromley D."/>
            <person name="Padamsee M."/>
            <person name="Oelkers P."/>
            <person name="Bazzi H."/>
            <person name="Christiano A.M."/>
            <person name="Billheimer J.T."/>
            <person name="Sturley S.L."/>
        </authorList>
    </citation>
    <scope>FUNCTION</scope>
    <scope>CATALYTIC ACTIVITY</scope>
    <scope>TISSUE SPECIFICITY</scope>
</reference>
<reference key="5">
    <citation type="journal article" date="2005" name="J. Lipid Res.">
        <title>A human skin multifunctional O-acyltransferase that catalyzes the synthesis of acylglycerols, waxes, and retinyl esters.</title>
        <authorList>
            <person name="Yen C.-L.E."/>
            <person name="Brown C.H. IV"/>
            <person name="Monetti M."/>
            <person name="Farese R.V. Jr."/>
        </authorList>
    </citation>
    <scope>CATALYTIC ACTIVITY</scope>
    <scope>FUNCTION</scope>
    <scope>TISSUE SPECIFICITY</scope>
</reference>
<reference key="6">
    <citation type="journal article" date="2014" name="Proc. Natl. Acad. Sci. U.S.A.">
        <title>Identification of the 11-cis-specific retinyl-ester synthase in retinal Mueller cells as multifunctional O-acyltransferase (MFAT).</title>
        <authorList>
            <person name="Kaylor J.J."/>
            <person name="Cook J.D."/>
            <person name="Makshanoff J."/>
            <person name="Bischoff N."/>
            <person name="Yong J."/>
            <person name="Travis G.H."/>
        </authorList>
    </citation>
    <scope>FUNCTION</scope>
    <scope>CATALYTIC ACTIVITY</scope>
    <scope>BIOPHYSICOCHEMICAL PROPERTIES</scope>
</reference>
<reference key="7">
    <citation type="journal article" date="2017" name="J. Lipid Res.">
        <title>Synthesis of neutral ether lipid monoalkyl-diacylglycerol by lipid acyltransferases.</title>
        <authorList>
            <person name="Ma Z."/>
            <person name="Onorato J.M."/>
            <person name="Chen L."/>
            <person name="Nelson D.W."/>
            <person name="Yen C.E."/>
            <person name="Cheng D."/>
        </authorList>
    </citation>
    <scope>FUNCTION</scope>
    <scope>CATALYTIC ACTIVITY</scope>
</reference>
<name>AWAT2_HUMAN</name>
<keyword id="KW-0012">Acyltransferase</keyword>
<keyword id="KW-0256">Endoplasmic reticulum</keyword>
<keyword id="KW-0444">Lipid biosynthesis</keyword>
<keyword id="KW-0443">Lipid metabolism</keyword>
<keyword id="KW-0472">Membrane</keyword>
<keyword id="KW-1185">Reference proteome</keyword>
<keyword id="KW-0808">Transferase</keyword>
<keyword id="KW-0812">Transmembrane</keyword>
<keyword id="KW-1133">Transmembrane helix</keyword>
<feature type="chain" id="PRO_0000249052" description="Acyl-CoA wax alcohol acyltransferase 2">
    <location>
        <begin position="1"/>
        <end position="333"/>
    </location>
</feature>
<feature type="transmembrane region" description="Helical" evidence="2">
    <location>
        <begin position="15"/>
        <end position="35"/>
    </location>
</feature>
<feature type="transmembrane region" description="Helical" evidence="2">
    <location>
        <begin position="38"/>
        <end position="58"/>
    </location>
</feature>
<feature type="transmembrane region" description="Helical" evidence="2">
    <location>
        <begin position="130"/>
        <end position="150"/>
    </location>
</feature>
<proteinExistence type="evidence at protein level"/>
<sequence length="333" mass="38094">MLLPSKKDLKTALDVFAVFQWSFSALLITTTVIAVNLYLVVFTPYWPVTVLILTWLAFDWKTPQRGGRRFTCVRHWRLWKHYSDYFPLKLLKTHDICPSRNYILVCHPHGLFAHGWFGHFATEASGFSKIFPGITPYILTLGAFFWMPFLREYVMSTGACSVSRSSIDFLLTHKGTGNMVIVVIGGLAECRYSLPGSSTLVLKNRSGFVRMALQHGVPLIPAYAFGETDLYDQHIFTPGGFVNRFQKWFQSMVHIYPCAFYGRGFTKNSWGLLPYSRPVTTIVGEPLPMPKIENPSQEIVAKYHTLYIDALRKLFDQHKTKFGISETQELEII</sequence>
<accession>Q6E213</accession>
<accession>Q6IEE3</accession>
<accession>Q6P437</accession>
<protein>
    <recommendedName>
        <fullName>Acyl-CoA wax alcohol acyltransferase 2</fullName>
        <ecNumber evidence="3 4 5 7">2.3.1.75</ecNumber>
    </recommendedName>
    <alternativeName>
        <fullName evidence="9">11-cis-specific retinyl-ester synthase</fullName>
        <shortName evidence="9">11-cis-RE-synthase</shortName>
    </alternativeName>
    <alternativeName>
        <fullName>Acyl-CoA retinol O-fatty-acyltransferase</fullName>
        <shortName>ARAT</shortName>
        <shortName>Retinol O-fatty-acyltransferase</shortName>
        <ecNumber evidence="5 6">2.3.1.76</ecNumber>
    </alternativeName>
    <alternativeName>
        <fullName>Diacylglycerol O-acyltransferase 2-like protein 4</fullName>
        <ecNumber evidence="5">2.3.1.20</ecNumber>
    </alternativeName>
    <alternativeName>
        <fullName>Diacylglycerol O-acyltransferase candidate 4</fullName>
        <shortName>hDC4</shortName>
    </alternativeName>
    <alternativeName>
        <fullName>Long-chain-alcohol O-fatty-acyltransferase 2</fullName>
    </alternativeName>
    <alternativeName>
        <fullName evidence="8">Multifunctional O-acyltransferase</fullName>
    </alternativeName>
    <alternativeName>
        <fullName>Wax synthase</fullName>
        <shortName>hWS</shortName>
    </alternativeName>
</protein>
<comment type="function">
    <text evidence="3 4 5 6 7">Acyltransferase that catalyzes the formation of ester bonds between fatty alcohols and fatty acyl-CoAs to form wax monoesters (PubMed:15220349, PubMed:15671038, PubMed:16106050, PubMed:28420705). Shows a preference for medium chain acyl-CoAs from C12 to C16 in length and fatty alcohols shorter than C20, as the acyl donors and acceptors, respectively (PubMed:15220349, PubMed:15671038). Also possesses acyl-CoA retinol acyltransferase (ARAT) activity that preferentially esterifies 11-cis-retinol, a chromophore precursor of bleached opsin pigments in cone cells (PubMed:16106050, PubMed:24799687). Shows higher catalytic efficiency toward 11-cis-retinol versus 9-cis-retinol, 13-cis-retinol, and all-trans-retinol substrates (PubMed:24799687).</text>
</comment>
<comment type="catalytic activity">
    <reaction evidence="3 4 5 7">
        <text>a long chain fatty alcohol + a fatty acyl-CoA = a wax ester + CoA</text>
        <dbReference type="Rhea" id="RHEA:38443"/>
        <dbReference type="ChEBI" id="CHEBI:10036"/>
        <dbReference type="ChEBI" id="CHEBI:17135"/>
        <dbReference type="ChEBI" id="CHEBI:57287"/>
        <dbReference type="ChEBI" id="CHEBI:77636"/>
        <dbReference type="EC" id="2.3.1.75"/>
    </reaction>
    <physiologicalReaction direction="left-to-right" evidence="11 12 13 15">
        <dbReference type="Rhea" id="RHEA:38444"/>
    </physiologicalReaction>
</comment>
<comment type="catalytic activity">
    <reaction evidence="5 6">
        <text>all-trans-retinol + an acyl-CoA = an all-trans-retinyl ester + CoA</text>
        <dbReference type="Rhea" id="RHEA:11488"/>
        <dbReference type="ChEBI" id="CHEBI:17336"/>
        <dbReference type="ChEBI" id="CHEBI:57287"/>
        <dbReference type="ChEBI" id="CHEBI:58342"/>
        <dbReference type="ChEBI" id="CHEBI:63410"/>
        <dbReference type="EC" id="2.3.1.76"/>
    </reaction>
    <physiologicalReaction direction="left-to-right" evidence="13 14">
        <dbReference type="Rhea" id="RHEA:11489"/>
    </physiologicalReaction>
</comment>
<comment type="catalytic activity">
    <reaction evidence="5">
        <text>an acyl-CoA + a 1,2-diacyl-sn-glycerol = a triacyl-sn-glycerol + CoA</text>
        <dbReference type="Rhea" id="RHEA:10868"/>
        <dbReference type="ChEBI" id="CHEBI:17815"/>
        <dbReference type="ChEBI" id="CHEBI:57287"/>
        <dbReference type="ChEBI" id="CHEBI:58342"/>
        <dbReference type="ChEBI" id="CHEBI:64615"/>
        <dbReference type="EC" id="2.3.1.20"/>
    </reaction>
    <physiologicalReaction direction="left-to-right" evidence="13">
        <dbReference type="Rhea" id="RHEA:10869"/>
    </physiologicalReaction>
</comment>
<comment type="catalytic activity">
    <reaction evidence="6">
        <text>11-cis-retinol + a fatty acyl-CoA = 11-cis-retinyl ester + CoA</text>
        <dbReference type="Rhea" id="RHEA:77767"/>
        <dbReference type="ChEBI" id="CHEBI:16302"/>
        <dbReference type="ChEBI" id="CHEBI:57287"/>
        <dbReference type="ChEBI" id="CHEBI:77636"/>
        <dbReference type="ChEBI" id="CHEBI:195358"/>
    </reaction>
    <physiologicalReaction direction="left-to-right" evidence="14">
        <dbReference type="Rhea" id="RHEA:77768"/>
    </physiologicalReaction>
</comment>
<comment type="catalytic activity">
    <reaction evidence="6">
        <text>9-cis-retinol + a fatty acyl-CoA = 9-cis-retinyl ester + CoA</text>
        <dbReference type="Rhea" id="RHEA:78263"/>
        <dbReference type="ChEBI" id="CHEBI:57287"/>
        <dbReference type="ChEBI" id="CHEBI:77636"/>
        <dbReference type="ChEBI" id="CHEBI:78272"/>
        <dbReference type="ChEBI" id="CHEBI:195360"/>
    </reaction>
    <physiologicalReaction direction="left-to-right" evidence="14">
        <dbReference type="Rhea" id="RHEA:78264"/>
    </physiologicalReaction>
</comment>
<comment type="catalytic activity">
    <reaction evidence="6">
        <text>13-cis-retinol + a fatty acyl-CoA = 13-cis-retinyl ester + CoA</text>
        <dbReference type="Rhea" id="RHEA:77771"/>
        <dbReference type="ChEBI" id="CHEBI:45479"/>
        <dbReference type="ChEBI" id="CHEBI:57287"/>
        <dbReference type="ChEBI" id="CHEBI:77636"/>
        <dbReference type="ChEBI" id="CHEBI:195359"/>
    </reaction>
    <physiologicalReaction direction="left-to-right" evidence="14">
        <dbReference type="Rhea" id="RHEA:77772"/>
    </physiologicalReaction>
</comment>
<comment type="catalytic activity">
    <reaction evidence="7">
        <text>a 1-acylglycerol + an acyl-CoA = a 1,2-diacylglycerol + CoA</text>
        <dbReference type="Rhea" id="RHEA:39943"/>
        <dbReference type="ChEBI" id="CHEBI:35759"/>
        <dbReference type="ChEBI" id="CHEBI:49172"/>
        <dbReference type="ChEBI" id="CHEBI:57287"/>
        <dbReference type="ChEBI" id="CHEBI:58342"/>
    </reaction>
    <physiologicalReaction direction="left-to-right" evidence="15">
        <dbReference type="Rhea" id="RHEA:39944"/>
    </physiologicalReaction>
</comment>
<comment type="catalytic activity">
    <reaction evidence="7">
        <text>1-O-alkylglycerol + an acyl-CoA = 1-O-alkyl-3-acylglycerol + CoA</text>
        <dbReference type="Rhea" id="RHEA:77627"/>
        <dbReference type="ChEBI" id="CHEBI:57287"/>
        <dbReference type="ChEBI" id="CHEBI:58342"/>
        <dbReference type="ChEBI" id="CHEBI:76225"/>
        <dbReference type="ChEBI" id="CHEBI:77997"/>
    </reaction>
    <physiologicalReaction direction="left-to-right" evidence="15">
        <dbReference type="Rhea" id="RHEA:77628"/>
    </physiologicalReaction>
</comment>
<comment type="catalytic activity">
    <reaction evidence="5">
        <text>a 2-acylglycerol + an acyl-CoA = a 1,2-diacyl-sn-glycerol + CoA</text>
        <dbReference type="Rhea" id="RHEA:32947"/>
        <dbReference type="ChEBI" id="CHEBI:17389"/>
        <dbReference type="ChEBI" id="CHEBI:17815"/>
        <dbReference type="ChEBI" id="CHEBI:57287"/>
        <dbReference type="ChEBI" id="CHEBI:58342"/>
    </reaction>
    <physiologicalReaction direction="left-to-right" evidence="13">
        <dbReference type="Rhea" id="RHEA:32948"/>
    </physiologicalReaction>
</comment>
<comment type="catalytic activity">
    <reaction evidence="5">
        <text>2-(9Z-octadecenoyl)-glycerol + hexadecanoyl-CoA = 1-hexadecanoyl-2-(9Z-octadecenoyl)-sn-glycerol + CoA</text>
        <dbReference type="Rhea" id="RHEA:38071"/>
        <dbReference type="ChEBI" id="CHEBI:57287"/>
        <dbReference type="ChEBI" id="CHEBI:57379"/>
        <dbReference type="ChEBI" id="CHEBI:73990"/>
        <dbReference type="ChEBI" id="CHEBI:75466"/>
    </reaction>
    <physiologicalReaction direction="left-to-right" evidence="13">
        <dbReference type="Rhea" id="RHEA:38072"/>
    </physiologicalReaction>
</comment>
<comment type="catalytic activity">
    <reaction evidence="5">
        <text>1,2-di-(9Z-octadecenoyl)-sn-glycerol + hexadecanoyl-CoA = 1,2-di-(9Z)-octadecenoyl-3-hexadecanoyl-sn-glycerol + CoA</text>
        <dbReference type="Rhea" id="RHEA:38163"/>
        <dbReference type="ChEBI" id="CHEBI:52333"/>
        <dbReference type="ChEBI" id="CHEBI:57287"/>
        <dbReference type="ChEBI" id="CHEBI:57379"/>
        <dbReference type="ChEBI" id="CHEBI:75583"/>
    </reaction>
    <physiologicalReaction direction="left-to-right" evidence="13">
        <dbReference type="Rhea" id="RHEA:38164"/>
    </physiologicalReaction>
</comment>
<comment type="catalytic activity">
    <reaction evidence="4 5">
        <text>hexadecan-1-ol + hexadecanoyl-CoA = hexadecanyl hexadecanoate + CoA</text>
        <dbReference type="Rhea" id="RHEA:38167"/>
        <dbReference type="ChEBI" id="CHEBI:16125"/>
        <dbReference type="ChEBI" id="CHEBI:57287"/>
        <dbReference type="ChEBI" id="CHEBI:57379"/>
        <dbReference type="ChEBI" id="CHEBI:75584"/>
    </reaction>
    <physiologicalReaction direction="left-to-right" evidence="12 13">
        <dbReference type="Rhea" id="RHEA:38168"/>
    </physiologicalReaction>
</comment>
<comment type="catalytic activity">
    <reaction evidence="5">
        <text>hexadecane-1,2-diol + hexadecanoyl-CoA = 2-hydroxyhexadecyl hexadecanoate + CoA</text>
        <dbReference type="Rhea" id="RHEA:38171"/>
        <dbReference type="ChEBI" id="CHEBI:57287"/>
        <dbReference type="ChEBI" id="CHEBI:57379"/>
        <dbReference type="ChEBI" id="CHEBI:75586"/>
        <dbReference type="ChEBI" id="CHEBI:75587"/>
    </reaction>
    <physiologicalReaction direction="left-to-right" evidence="13">
        <dbReference type="Rhea" id="RHEA:38172"/>
    </physiologicalReaction>
</comment>
<comment type="catalytic activity">
    <reaction evidence="6">
        <text>9-cis-retinol + hexadecanoyl-CoA = 9-cis-retinyl hexadecanoate + CoA</text>
        <dbReference type="Rhea" id="RHEA:55328"/>
        <dbReference type="ChEBI" id="CHEBI:57287"/>
        <dbReference type="ChEBI" id="CHEBI:57379"/>
        <dbReference type="ChEBI" id="CHEBI:78272"/>
        <dbReference type="ChEBI" id="CHEBI:138725"/>
    </reaction>
    <physiologicalReaction direction="left-to-right" evidence="14">
        <dbReference type="Rhea" id="RHEA:55329"/>
    </physiologicalReaction>
</comment>
<comment type="catalytic activity">
    <reaction evidence="5 6">
        <text>all-trans-retinol + hexadecanoyl-CoA = all-trans-retinyl hexadecanoate + CoA</text>
        <dbReference type="Rhea" id="RHEA:38175"/>
        <dbReference type="ChEBI" id="CHEBI:17336"/>
        <dbReference type="ChEBI" id="CHEBI:17616"/>
        <dbReference type="ChEBI" id="CHEBI:57287"/>
        <dbReference type="ChEBI" id="CHEBI:57379"/>
    </reaction>
    <physiologicalReaction direction="left-to-right" evidence="13 14">
        <dbReference type="Rhea" id="RHEA:38176"/>
    </physiologicalReaction>
</comment>
<comment type="catalytic activity">
    <reaction evidence="4">
        <text>1,2-di-(9Z-octadecenoyl)-sn-glycerol + (9Z)-octadecenoyl-CoA = 1,2,3-tri-(9Z-octadecenoyl)-glycerol + CoA</text>
        <dbReference type="Rhea" id="RHEA:38219"/>
        <dbReference type="ChEBI" id="CHEBI:52333"/>
        <dbReference type="ChEBI" id="CHEBI:53753"/>
        <dbReference type="ChEBI" id="CHEBI:57287"/>
        <dbReference type="ChEBI" id="CHEBI:57387"/>
    </reaction>
    <physiologicalReaction direction="left-to-right" evidence="12">
        <dbReference type="Rhea" id="RHEA:38220"/>
    </physiologicalReaction>
</comment>
<comment type="catalytic activity">
    <reaction evidence="4">
        <text>hexadecan-1-ol + (9Z)-octadecenoyl-CoA = hexadecanyl (9Z)-octadecenoate + CoA</text>
        <dbReference type="Rhea" id="RHEA:38227"/>
        <dbReference type="ChEBI" id="CHEBI:16125"/>
        <dbReference type="ChEBI" id="CHEBI:57287"/>
        <dbReference type="ChEBI" id="CHEBI:57387"/>
        <dbReference type="ChEBI" id="CHEBI:75622"/>
    </reaction>
    <physiologicalReaction direction="left-to-right" evidence="12">
        <dbReference type="Rhea" id="RHEA:38228"/>
    </physiologicalReaction>
</comment>
<comment type="catalytic activity">
    <reaction evidence="4">
        <text>(9Z)-hexadecen-1-ol + (9Z)-octadecenoyl-CoA = 1-O-(9Z)-hexadecenyl (9Z)-octadecenoate + CoA</text>
        <dbReference type="Rhea" id="RHEA:38231"/>
        <dbReference type="ChEBI" id="CHEBI:57287"/>
        <dbReference type="ChEBI" id="CHEBI:57387"/>
        <dbReference type="ChEBI" id="CHEBI:75623"/>
        <dbReference type="ChEBI" id="CHEBI:75624"/>
    </reaction>
    <physiologicalReaction direction="left-to-right" evidence="12">
        <dbReference type="Rhea" id="RHEA:38232"/>
    </physiologicalReaction>
</comment>
<comment type="catalytic activity">
    <reaction evidence="4">
        <text>octadecan-1-ol + (9Z)-octadecenoyl-CoA = 1-O-octadecyl (9Z)-octadecenoate + CoA</text>
        <dbReference type="Rhea" id="RHEA:38235"/>
        <dbReference type="ChEBI" id="CHEBI:32154"/>
        <dbReference type="ChEBI" id="CHEBI:57287"/>
        <dbReference type="ChEBI" id="CHEBI:57387"/>
        <dbReference type="ChEBI" id="CHEBI:75625"/>
    </reaction>
    <physiologicalReaction direction="left-to-right" evidence="12">
        <dbReference type="Rhea" id="RHEA:38236"/>
    </physiologicalReaction>
</comment>
<comment type="catalytic activity">
    <reaction evidence="4">
        <text>(9Z)-octadecen-1-ol + (9Z)-octadecenoyl-CoA = 1-O-(9Z)-octadecenyl (9Z)-octadecenoate + CoA</text>
        <dbReference type="Rhea" id="RHEA:38239"/>
        <dbReference type="ChEBI" id="CHEBI:57287"/>
        <dbReference type="ChEBI" id="CHEBI:57387"/>
        <dbReference type="ChEBI" id="CHEBI:73504"/>
        <dbReference type="ChEBI" id="CHEBI:75626"/>
    </reaction>
    <physiologicalReaction direction="left-to-right" evidence="12">
        <dbReference type="Rhea" id="RHEA:38240"/>
    </physiologicalReaction>
</comment>
<comment type="catalytic activity">
    <reaction evidence="4">
        <text>hexadecan-1-ol + (9Z)-hexadecenoyl-CoA = 1-O-hexadecyl (9Z)-hexadecenoate + CoA</text>
        <dbReference type="Rhea" id="RHEA:38247"/>
        <dbReference type="ChEBI" id="CHEBI:16125"/>
        <dbReference type="ChEBI" id="CHEBI:57287"/>
        <dbReference type="ChEBI" id="CHEBI:61540"/>
        <dbReference type="ChEBI" id="CHEBI:75629"/>
    </reaction>
    <physiologicalReaction direction="left-to-right" evidence="12">
        <dbReference type="Rhea" id="RHEA:38248"/>
    </physiologicalReaction>
</comment>
<comment type="catalytic activity">
    <reaction evidence="4">
        <text>hexadecan-1-ol + octadecanoyl-CoA = hexadecanyl octadecanoate + CoA</text>
        <dbReference type="Rhea" id="RHEA:38251"/>
        <dbReference type="ChEBI" id="CHEBI:16125"/>
        <dbReference type="ChEBI" id="CHEBI:57287"/>
        <dbReference type="ChEBI" id="CHEBI:57394"/>
        <dbReference type="ChEBI" id="CHEBI:75631"/>
    </reaction>
    <physiologicalReaction direction="left-to-right" evidence="12">
        <dbReference type="Rhea" id="RHEA:38252"/>
    </physiologicalReaction>
</comment>
<comment type="catalytic activity">
    <reaction evidence="6">
        <text>11-cis-retinol + hexadecanoyl-CoA = 11-cis-retinyl hexadecanoate + CoA</text>
        <dbReference type="Rhea" id="RHEA:55324"/>
        <dbReference type="ChEBI" id="CHEBI:16254"/>
        <dbReference type="ChEBI" id="CHEBI:16302"/>
        <dbReference type="ChEBI" id="CHEBI:57287"/>
        <dbReference type="ChEBI" id="CHEBI:57379"/>
    </reaction>
    <physiologicalReaction direction="left-to-right" evidence="14">
        <dbReference type="Rhea" id="RHEA:55325"/>
    </physiologicalReaction>
</comment>
<comment type="catalytic activity">
    <reaction evidence="7">
        <text>1-O-(9Z-octadecenyl)-glycerol + (9Z)-octadecenoyl-CoA = 1-O-(9Z-octadecyl)-3-(9Z-octadecenoyl)-glycerol + CoA</text>
        <dbReference type="Rhea" id="RHEA:55340"/>
        <dbReference type="ChEBI" id="CHEBI:34116"/>
        <dbReference type="ChEBI" id="CHEBI:57287"/>
        <dbReference type="ChEBI" id="CHEBI:57387"/>
        <dbReference type="ChEBI" id="CHEBI:197429"/>
    </reaction>
    <physiologicalReaction direction="left-to-right" evidence="15">
        <dbReference type="Rhea" id="RHEA:55341"/>
    </physiologicalReaction>
</comment>
<comment type="catalytic activity">
    <reaction evidence="7">
        <text>1-(9Z-octadecenoyl)-glycerol + (9Z)-octadecenoyl-CoA = 1,2-di-(9Z-octadecenoyl)-glycerol + CoA</text>
        <dbReference type="Rhea" id="RHEA:37915"/>
        <dbReference type="ChEBI" id="CHEBI:52323"/>
        <dbReference type="ChEBI" id="CHEBI:57287"/>
        <dbReference type="ChEBI" id="CHEBI:57387"/>
        <dbReference type="ChEBI" id="CHEBI:75342"/>
    </reaction>
    <physiologicalReaction direction="left-to-right" evidence="15">
        <dbReference type="Rhea" id="RHEA:37916"/>
    </physiologicalReaction>
</comment>
<comment type="catalytic activity">
    <reaction evidence="1">
        <text>11-cis-retinol + tetradecanoyl-CoA = 11-cis-retinyl tetradecanoate + CoA</text>
        <dbReference type="Rhea" id="RHEA:55272"/>
        <dbReference type="ChEBI" id="CHEBI:16302"/>
        <dbReference type="ChEBI" id="CHEBI:57287"/>
        <dbReference type="ChEBI" id="CHEBI:57385"/>
        <dbReference type="ChEBI" id="CHEBI:138676"/>
    </reaction>
    <physiologicalReaction direction="left-to-right" evidence="1">
        <dbReference type="Rhea" id="RHEA:55273"/>
    </physiologicalReaction>
</comment>
<comment type="catalytic activity">
    <reaction evidence="1">
        <text>9-cis-retinol + tetradecanoyl-CoA = 9-cis-retinyl tetradecanoate + CoA</text>
        <dbReference type="Rhea" id="RHEA:55276"/>
        <dbReference type="ChEBI" id="CHEBI:57287"/>
        <dbReference type="ChEBI" id="CHEBI:57385"/>
        <dbReference type="ChEBI" id="CHEBI:78272"/>
        <dbReference type="ChEBI" id="CHEBI:138691"/>
    </reaction>
    <physiologicalReaction direction="left-to-right" evidence="1">
        <dbReference type="Rhea" id="RHEA:55277"/>
    </physiologicalReaction>
</comment>
<comment type="catalytic activity">
    <reaction evidence="1">
        <text>13-cis-retinol + tetradecanoyl-CoA = 13-cis-retinyl tetradecanoate + CoA</text>
        <dbReference type="Rhea" id="RHEA:55280"/>
        <dbReference type="ChEBI" id="CHEBI:45479"/>
        <dbReference type="ChEBI" id="CHEBI:57287"/>
        <dbReference type="ChEBI" id="CHEBI:57385"/>
        <dbReference type="ChEBI" id="CHEBI:138704"/>
    </reaction>
    <physiologicalReaction direction="left-to-right" evidence="1">
        <dbReference type="Rhea" id="RHEA:55281"/>
    </physiologicalReaction>
</comment>
<comment type="catalytic activity">
    <reaction evidence="1">
        <text>all-trans-retinol + tetradecanoyl-CoA = all-trans-retinyl tetradecanoate + CoA</text>
        <dbReference type="Rhea" id="RHEA:55284"/>
        <dbReference type="ChEBI" id="CHEBI:17336"/>
        <dbReference type="ChEBI" id="CHEBI:57287"/>
        <dbReference type="ChEBI" id="CHEBI:57385"/>
        <dbReference type="ChEBI" id="CHEBI:138718"/>
    </reaction>
    <physiologicalReaction direction="left-to-right" evidence="1">
        <dbReference type="Rhea" id="RHEA:55285"/>
    </physiologicalReaction>
</comment>
<comment type="catalytic activity">
    <reaction evidence="1">
        <text>tetradecan-1-ol + tetradecanoyl-CoA = tetradecanyl tetradecanoate + CoA</text>
        <dbReference type="Rhea" id="RHEA:55288"/>
        <dbReference type="ChEBI" id="CHEBI:57287"/>
        <dbReference type="ChEBI" id="CHEBI:57385"/>
        <dbReference type="ChEBI" id="CHEBI:77417"/>
        <dbReference type="ChEBI" id="CHEBI:138721"/>
    </reaction>
    <physiologicalReaction direction="left-to-right" evidence="1">
        <dbReference type="Rhea" id="RHEA:55289"/>
    </physiologicalReaction>
</comment>
<comment type="activity regulation">
    <text evidence="1">11-cis retinoids act as allosteric modulators of acyl-CoA retinol O-fatty-acyltransferase (ARAT) activity by suppressing esterification of 9-cis, 13-cis, or all-trans retinols concurrently increasing the enzyme specificity toward 11-cis isomer.</text>
</comment>
<comment type="biophysicochemical properties">
    <kinetics>
        <KM evidence="6">5.8 uM for 11-cis-retinol</KM>
        <KM evidence="6">19.8 uM for 9-cis-retinol</KM>
        <KM evidence="6">27.4 uM for 13-cis-retinol</KM>
        <KM evidence="6">24.8 uM for all-trans-retinol</KM>
        <Vmax evidence="6">980.0 pmol/min/mg enzyme for 11-cis-retinol</Vmax>
        <Vmax evidence="6">1010.0 pmol/min/mg enzyme for 9-cis-retinol</Vmax>
        <Vmax evidence="6">6.4 pmol/min/mg enzyme for 13-cis-retinol</Vmax>
        <Vmax evidence="6">148.0 pmol/min/mg enzyme for all-trans-retinol</Vmax>
    </kinetics>
</comment>
<comment type="subunit">
    <text evidence="1">Monomer.</text>
</comment>
<comment type="subcellular location">
    <subcellularLocation>
        <location evidence="1">Endoplasmic reticulum membrane</location>
        <topology evidence="2">Multi-pass membrane protein</topology>
    </subcellularLocation>
</comment>
<comment type="tissue specificity">
    <text evidence="3 4 5">Highly expressed in skin, where it is primarily restricted to undifferentiated peripheral sebocytes. Also expressed at lower level in other tissues except pancreas.</text>
</comment>
<comment type="similarity">
    <text evidence="10">Belongs to the diacylglycerol acyltransferase family.</text>
</comment>